<name>RL29_STAAB</name>
<evidence type="ECO:0000255" key="1">
    <source>
        <dbReference type="HAMAP-Rule" id="MF_00374"/>
    </source>
</evidence>
<evidence type="ECO:0000305" key="2"/>
<gene>
    <name evidence="1" type="primary">rpmC</name>
    <name type="ordered locus">SAB2114c</name>
</gene>
<reference key="1">
    <citation type="journal article" date="2007" name="PLoS ONE">
        <title>Molecular correlates of host specialization in Staphylococcus aureus.</title>
        <authorList>
            <person name="Herron-Olson L."/>
            <person name="Fitzgerald J.R."/>
            <person name="Musser J.M."/>
            <person name="Kapur V."/>
        </authorList>
    </citation>
    <scope>NUCLEOTIDE SEQUENCE [LARGE SCALE GENOMIC DNA]</scope>
    <source>
        <strain>bovine RF122 / ET3-1</strain>
    </source>
</reference>
<proteinExistence type="evidence at protein level"/>
<organism>
    <name type="scientific">Staphylococcus aureus (strain bovine RF122 / ET3-1)</name>
    <dbReference type="NCBI Taxonomy" id="273036"/>
    <lineage>
        <taxon>Bacteria</taxon>
        <taxon>Bacillati</taxon>
        <taxon>Bacillota</taxon>
        <taxon>Bacilli</taxon>
        <taxon>Bacillales</taxon>
        <taxon>Staphylococcaceae</taxon>
        <taxon>Staphylococcus</taxon>
    </lineage>
</organism>
<protein>
    <recommendedName>
        <fullName evidence="1">Large ribosomal subunit protein uL29</fullName>
    </recommendedName>
    <alternativeName>
        <fullName evidence="2">50S ribosomal protein L29</fullName>
    </alternativeName>
</protein>
<accession>Q2YYN0</accession>
<feature type="chain" id="PRO_1000007618" description="Large ribosomal subunit protein uL29">
    <location>
        <begin position="1"/>
        <end position="69"/>
    </location>
</feature>
<keyword id="KW-0002">3D-structure</keyword>
<keyword id="KW-0687">Ribonucleoprotein</keyword>
<keyword id="KW-0689">Ribosomal protein</keyword>
<sequence length="69" mass="8090">MKAKEIRDLTTSEIEEQIKSSKEELFNLRFQLATGQLEETARIRTVRKTIARLKTVAREREIEQSKANQ</sequence>
<comment type="similarity">
    <text evidence="1">Belongs to the universal ribosomal protein uL29 family.</text>
</comment>
<dbReference type="EMBL" id="AJ938182">
    <property type="protein sequence ID" value="CAI81803.1"/>
    <property type="molecule type" value="Genomic_DNA"/>
</dbReference>
<dbReference type="RefSeq" id="WP_000644737.1">
    <property type="nucleotide sequence ID" value="NC_007622.1"/>
</dbReference>
<dbReference type="PDB" id="6FXC">
    <property type="method" value="EM"/>
    <property type="resolution" value="6.76 A"/>
    <property type="chains" value="AW/BW=2-68"/>
</dbReference>
<dbReference type="PDBsum" id="6FXC"/>
<dbReference type="EMDB" id="EMD-0243"/>
<dbReference type="EMDB" id="EMD-3637"/>
<dbReference type="SMR" id="Q2YYN0"/>
<dbReference type="GeneID" id="98346554"/>
<dbReference type="KEGG" id="sab:SAB2114c"/>
<dbReference type="HOGENOM" id="CLU_158491_5_2_9"/>
<dbReference type="GO" id="GO:0022625">
    <property type="term" value="C:cytosolic large ribosomal subunit"/>
    <property type="evidence" value="ECO:0007669"/>
    <property type="project" value="TreeGrafter"/>
</dbReference>
<dbReference type="GO" id="GO:0003735">
    <property type="term" value="F:structural constituent of ribosome"/>
    <property type="evidence" value="ECO:0007669"/>
    <property type="project" value="InterPro"/>
</dbReference>
<dbReference type="GO" id="GO:0006412">
    <property type="term" value="P:translation"/>
    <property type="evidence" value="ECO:0007669"/>
    <property type="project" value="UniProtKB-UniRule"/>
</dbReference>
<dbReference type="CDD" id="cd00427">
    <property type="entry name" value="Ribosomal_L29_HIP"/>
    <property type="match status" value="1"/>
</dbReference>
<dbReference type="FunFam" id="1.10.287.310:FF:000001">
    <property type="entry name" value="50S ribosomal protein L29"/>
    <property type="match status" value="1"/>
</dbReference>
<dbReference type="Gene3D" id="1.10.287.310">
    <property type="match status" value="1"/>
</dbReference>
<dbReference type="HAMAP" id="MF_00374">
    <property type="entry name" value="Ribosomal_uL29"/>
    <property type="match status" value="1"/>
</dbReference>
<dbReference type="InterPro" id="IPR050063">
    <property type="entry name" value="Ribosomal_protein_uL29"/>
</dbReference>
<dbReference type="InterPro" id="IPR001854">
    <property type="entry name" value="Ribosomal_uL29"/>
</dbReference>
<dbReference type="InterPro" id="IPR036049">
    <property type="entry name" value="Ribosomal_uL29_sf"/>
</dbReference>
<dbReference type="NCBIfam" id="TIGR00012">
    <property type="entry name" value="L29"/>
    <property type="match status" value="1"/>
</dbReference>
<dbReference type="PANTHER" id="PTHR10916">
    <property type="entry name" value="60S RIBOSOMAL PROTEIN L35/50S RIBOSOMAL PROTEIN L29"/>
    <property type="match status" value="1"/>
</dbReference>
<dbReference type="PANTHER" id="PTHR10916:SF0">
    <property type="entry name" value="LARGE RIBOSOMAL SUBUNIT PROTEIN UL29C"/>
    <property type="match status" value="1"/>
</dbReference>
<dbReference type="Pfam" id="PF00831">
    <property type="entry name" value="Ribosomal_L29"/>
    <property type="match status" value="1"/>
</dbReference>
<dbReference type="SUPFAM" id="SSF46561">
    <property type="entry name" value="Ribosomal protein L29 (L29p)"/>
    <property type="match status" value="1"/>
</dbReference>